<reference key="1">
    <citation type="journal article" date="2009" name="BMC Genomics">
        <title>Comprehensive EST analysis of the symbiotic sea anemone, Anemonia viridis.</title>
        <authorList>
            <person name="Sabourault C."/>
            <person name="Ganot P."/>
            <person name="Deleury E."/>
            <person name="Allemand D."/>
            <person name="Furla P."/>
        </authorList>
    </citation>
    <scope>NUCLEOTIDE SEQUENCE [MRNA]</scope>
</reference>
<reference key="2">
    <citation type="journal article" date="2011" name="BMC Genomics">
        <title>The mining of toxin-like polypeptides from EST database by single residue distribution analysis.</title>
        <authorList>
            <person name="Kozlov S."/>
            <person name="Grishin E."/>
        </authorList>
    </citation>
    <scope>NOMENCLATURE</scope>
</reference>
<reference key="3">
    <citation type="journal article" date="2012" name="Toxicon">
        <title>Development of a rational nomenclature for naming peptide and protein toxins from sea anemones.</title>
        <authorList>
            <person name="Oliveira J.S."/>
            <person name="Fuentes-Silva D."/>
            <person name="King G.F."/>
        </authorList>
    </citation>
    <scope>NOMENCLATURE</scope>
</reference>
<organism>
    <name type="scientific">Anemonia viridis</name>
    <name type="common">Snakelocks anemone</name>
    <dbReference type="NCBI Taxonomy" id="51769"/>
    <lineage>
        <taxon>Eukaryota</taxon>
        <taxon>Metazoa</taxon>
        <taxon>Cnidaria</taxon>
        <taxon>Anthozoa</taxon>
        <taxon>Hexacorallia</taxon>
        <taxon>Actiniaria</taxon>
        <taxon>Actiniidae</taxon>
        <taxon>Anemonia</taxon>
    </lineage>
</organism>
<sequence>MVFLLCFFLVADVSYGINKDCLLPMDVGRCRARFPRYYYNSSSRRCEKFNYGGCGGNANNFHTLEECEKVCGVRSRDSPKEN</sequence>
<feature type="signal peptide" evidence="2">
    <location>
        <begin position="1"/>
        <end position="16"/>
    </location>
</feature>
<feature type="chain" id="PRO_0000433765" description="U-actitoxin-Avd3l">
    <location>
        <begin position="17"/>
        <end position="75"/>
    </location>
</feature>
<feature type="propeptide" id="PRO_0000433766" evidence="7">
    <location>
        <begin position="76"/>
        <end position="82"/>
    </location>
</feature>
<feature type="domain" description="BPTI/Kunitz inhibitor" evidence="3">
    <location>
        <begin position="21"/>
        <end position="71"/>
    </location>
</feature>
<feature type="site" description="Reactive bond for trypsin" evidence="1">
    <location>
        <begin position="31"/>
        <end position="32"/>
    </location>
</feature>
<feature type="disulfide bond" evidence="3">
    <location>
        <begin position="21"/>
        <end position="71"/>
    </location>
</feature>
<feature type="disulfide bond" evidence="3">
    <location>
        <begin position="30"/>
        <end position="54"/>
    </location>
</feature>
<feature type="disulfide bond" evidence="3">
    <location>
        <begin position="46"/>
        <end position="67"/>
    </location>
</feature>
<comment type="function">
    <text evidence="2">Dual-function toxin that inhibits both the serine protease trypsin and voltage-gated potassium channels Kv1.2/KCNA2.</text>
</comment>
<comment type="subcellular location">
    <subcellularLocation>
        <location evidence="6">Secreted</location>
    </subcellularLocation>
    <subcellularLocation>
        <location evidence="6">Nematocyst</location>
    </subcellularLocation>
</comment>
<comment type="similarity">
    <text evidence="6">Belongs to the venom Kunitz-type family. Sea anemone type 2 potassium channel toxin subfamily.</text>
</comment>
<comment type="caution">
    <text evidence="6">Opinions are divided on whether Anemonia viridis (Forsskal, 1775) and Anemonia sulcata (Pennant, 1777) are separate species.</text>
</comment>
<proteinExistence type="inferred from homology"/>
<dbReference type="EMBL" id="FK731883">
    <property type="status" value="NOT_ANNOTATED_CDS"/>
    <property type="molecule type" value="mRNA"/>
</dbReference>
<dbReference type="SMR" id="P0DN13"/>
<dbReference type="GO" id="GO:0005576">
    <property type="term" value="C:extracellular region"/>
    <property type="evidence" value="ECO:0007669"/>
    <property type="project" value="UniProtKB-SubCell"/>
</dbReference>
<dbReference type="GO" id="GO:0042151">
    <property type="term" value="C:nematocyst"/>
    <property type="evidence" value="ECO:0007669"/>
    <property type="project" value="UniProtKB-SubCell"/>
</dbReference>
<dbReference type="GO" id="GO:0015459">
    <property type="term" value="F:potassium channel regulator activity"/>
    <property type="evidence" value="ECO:0007669"/>
    <property type="project" value="UniProtKB-KW"/>
</dbReference>
<dbReference type="GO" id="GO:0004867">
    <property type="term" value="F:serine-type endopeptidase inhibitor activity"/>
    <property type="evidence" value="ECO:0007669"/>
    <property type="project" value="UniProtKB-KW"/>
</dbReference>
<dbReference type="GO" id="GO:0090729">
    <property type="term" value="F:toxin activity"/>
    <property type="evidence" value="ECO:0007669"/>
    <property type="project" value="UniProtKB-KW"/>
</dbReference>
<dbReference type="CDD" id="cd22633">
    <property type="entry name" value="Kunitz_actitoxin-like"/>
    <property type="match status" value="1"/>
</dbReference>
<dbReference type="FunFam" id="4.10.410.10:FF:000021">
    <property type="entry name" value="Serine protease inhibitor, putative"/>
    <property type="match status" value="1"/>
</dbReference>
<dbReference type="Gene3D" id="4.10.410.10">
    <property type="entry name" value="Pancreatic trypsin inhibitor Kunitz domain"/>
    <property type="match status" value="1"/>
</dbReference>
<dbReference type="InterPro" id="IPR002223">
    <property type="entry name" value="Kunitz_BPTI"/>
</dbReference>
<dbReference type="InterPro" id="IPR036880">
    <property type="entry name" value="Kunitz_BPTI_sf"/>
</dbReference>
<dbReference type="InterPro" id="IPR020901">
    <property type="entry name" value="Prtase_inh_Kunz-CS"/>
</dbReference>
<dbReference type="InterPro" id="IPR050098">
    <property type="entry name" value="TFPI/VKTCI-like"/>
</dbReference>
<dbReference type="PANTHER" id="PTHR10083:SF374">
    <property type="entry name" value="BPTI_KUNITZ INHIBITOR DOMAIN-CONTAINING PROTEIN"/>
    <property type="match status" value="1"/>
</dbReference>
<dbReference type="PANTHER" id="PTHR10083">
    <property type="entry name" value="KUNITZ-TYPE PROTEASE INHIBITOR-RELATED"/>
    <property type="match status" value="1"/>
</dbReference>
<dbReference type="Pfam" id="PF00014">
    <property type="entry name" value="Kunitz_BPTI"/>
    <property type="match status" value="1"/>
</dbReference>
<dbReference type="PRINTS" id="PR00759">
    <property type="entry name" value="BASICPTASE"/>
</dbReference>
<dbReference type="SMART" id="SM00131">
    <property type="entry name" value="KU"/>
    <property type="match status" value="1"/>
</dbReference>
<dbReference type="SUPFAM" id="SSF57362">
    <property type="entry name" value="BPTI-like"/>
    <property type="match status" value="1"/>
</dbReference>
<dbReference type="PROSITE" id="PS00280">
    <property type="entry name" value="BPTI_KUNITZ_1"/>
    <property type="match status" value="1"/>
</dbReference>
<dbReference type="PROSITE" id="PS50279">
    <property type="entry name" value="BPTI_KUNITZ_2"/>
    <property type="match status" value="1"/>
</dbReference>
<accession>P0DN13</accession>
<evidence type="ECO:0000250" key="1"/>
<evidence type="ECO:0000250" key="2">
    <source>
        <dbReference type="UniProtKB" id="Q9TWG0"/>
    </source>
</evidence>
<evidence type="ECO:0000255" key="3">
    <source>
        <dbReference type="PROSITE-ProRule" id="PRU00031"/>
    </source>
</evidence>
<evidence type="ECO:0000303" key="4">
    <source>
    </source>
</evidence>
<evidence type="ECO:0000303" key="5">
    <source>
    </source>
</evidence>
<evidence type="ECO:0000305" key="6"/>
<evidence type="ECO:0000305" key="7">
    <source>
    </source>
</evidence>
<protein>
    <recommendedName>
        <fullName evidence="5">U-actitoxin-Avd3l</fullName>
        <shortName evidence="5">U-AITX-Avd3l</shortName>
    </recommendedName>
    <alternativeName>
        <fullName evidence="4">AsKC9</fullName>
    </alternativeName>
</protein>
<name>VKT9_ANEVI</name>
<keyword id="KW-1015">Disulfide bond</keyword>
<keyword id="KW-0872">Ion channel impairing toxin</keyword>
<keyword id="KW-0166">Nematocyst</keyword>
<keyword id="KW-0632">Potassium channel impairing toxin</keyword>
<keyword id="KW-0646">Protease inhibitor</keyword>
<keyword id="KW-0964">Secreted</keyword>
<keyword id="KW-0722">Serine protease inhibitor</keyword>
<keyword id="KW-0732">Signal</keyword>
<keyword id="KW-0800">Toxin</keyword>
<keyword id="KW-1220">Voltage-gated potassium channel impairing toxin</keyword>